<gene>
    <name evidence="1" type="primary">purA</name>
    <name type="ordered locus">SPy_0160</name>
    <name type="ordered locus">M5005_Spy0136</name>
</gene>
<accession>Q9A1P8</accession>
<accession>Q491G3</accession>
<proteinExistence type="inferred from homology"/>
<dbReference type="EC" id="6.3.4.4" evidence="1"/>
<dbReference type="EMBL" id="AE004092">
    <property type="protein sequence ID" value="AAK33262.1"/>
    <property type="molecule type" value="Genomic_DNA"/>
</dbReference>
<dbReference type="EMBL" id="CP000017">
    <property type="protein sequence ID" value="AAZ50755.1"/>
    <property type="molecule type" value="Genomic_DNA"/>
</dbReference>
<dbReference type="RefSeq" id="NP_268541.1">
    <property type="nucleotide sequence ID" value="NC_002737.2"/>
</dbReference>
<dbReference type="SMR" id="Q9A1P8"/>
<dbReference type="PaxDb" id="1314-HKU360_00182"/>
<dbReference type="KEGG" id="spy:SPy_0160"/>
<dbReference type="KEGG" id="spz:M5005_Spy0136"/>
<dbReference type="PATRIC" id="fig|160490.10.peg.140"/>
<dbReference type="HOGENOM" id="CLU_029848_0_0_9"/>
<dbReference type="OMA" id="FHHAKPI"/>
<dbReference type="UniPathway" id="UPA00075">
    <property type="reaction ID" value="UER00335"/>
</dbReference>
<dbReference type="Proteomes" id="UP000000750">
    <property type="component" value="Chromosome"/>
</dbReference>
<dbReference type="GO" id="GO:0005737">
    <property type="term" value="C:cytoplasm"/>
    <property type="evidence" value="ECO:0007669"/>
    <property type="project" value="UniProtKB-SubCell"/>
</dbReference>
<dbReference type="GO" id="GO:0004019">
    <property type="term" value="F:adenylosuccinate synthase activity"/>
    <property type="evidence" value="ECO:0007669"/>
    <property type="project" value="UniProtKB-UniRule"/>
</dbReference>
<dbReference type="GO" id="GO:0005525">
    <property type="term" value="F:GTP binding"/>
    <property type="evidence" value="ECO:0007669"/>
    <property type="project" value="UniProtKB-UniRule"/>
</dbReference>
<dbReference type="GO" id="GO:0000287">
    <property type="term" value="F:magnesium ion binding"/>
    <property type="evidence" value="ECO:0007669"/>
    <property type="project" value="UniProtKB-UniRule"/>
</dbReference>
<dbReference type="GO" id="GO:0044208">
    <property type="term" value="P:'de novo' AMP biosynthetic process"/>
    <property type="evidence" value="ECO:0007669"/>
    <property type="project" value="UniProtKB-UniRule"/>
</dbReference>
<dbReference type="GO" id="GO:0046040">
    <property type="term" value="P:IMP metabolic process"/>
    <property type="evidence" value="ECO:0007669"/>
    <property type="project" value="TreeGrafter"/>
</dbReference>
<dbReference type="CDD" id="cd03108">
    <property type="entry name" value="AdSS"/>
    <property type="match status" value="1"/>
</dbReference>
<dbReference type="FunFam" id="1.10.300.10:FF:000001">
    <property type="entry name" value="Adenylosuccinate synthetase"/>
    <property type="match status" value="1"/>
</dbReference>
<dbReference type="FunFam" id="3.90.170.10:FF:000001">
    <property type="entry name" value="Adenylosuccinate synthetase"/>
    <property type="match status" value="1"/>
</dbReference>
<dbReference type="Gene3D" id="3.40.440.10">
    <property type="entry name" value="Adenylosuccinate Synthetase, subunit A, domain 1"/>
    <property type="match status" value="1"/>
</dbReference>
<dbReference type="Gene3D" id="1.10.300.10">
    <property type="entry name" value="Adenylosuccinate Synthetase, subunit A, domain 2"/>
    <property type="match status" value="1"/>
</dbReference>
<dbReference type="Gene3D" id="3.90.170.10">
    <property type="entry name" value="Adenylosuccinate Synthetase, subunit A, domain 3"/>
    <property type="match status" value="1"/>
</dbReference>
<dbReference type="HAMAP" id="MF_00011">
    <property type="entry name" value="Adenylosucc_synth"/>
    <property type="match status" value="1"/>
</dbReference>
<dbReference type="InterPro" id="IPR018220">
    <property type="entry name" value="Adenylosuccin_syn_GTP-bd"/>
</dbReference>
<dbReference type="InterPro" id="IPR033128">
    <property type="entry name" value="Adenylosuccin_syn_Lys_AS"/>
</dbReference>
<dbReference type="InterPro" id="IPR042109">
    <property type="entry name" value="Adenylosuccinate_synth_dom1"/>
</dbReference>
<dbReference type="InterPro" id="IPR042110">
    <property type="entry name" value="Adenylosuccinate_synth_dom2"/>
</dbReference>
<dbReference type="InterPro" id="IPR042111">
    <property type="entry name" value="Adenylosuccinate_synth_dom3"/>
</dbReference>
<dbReference type="InterPro" id="IPR001114">
    <property type="entry name" value="Adenylosuccinate_synthetase"/>
</dbReference>
<dbReference type="InterPro" id="IPR027417">
    <property type="entry name" value="P-loop_NTPase"/>
</dbReference>
<dbReference type="NCBIfam" id="NF002223">
    <property type="entry name" value="PRK01117.1"/>
    <property type="match status" value="1"/>
</dbReference>
<dbReference type="NCBIfam" id="TIGR00184">
    <property type="entry name" value="purA"/>
    <property type="match status" value="1"/>
</dbReference>
<dbReference type="PANTHER" id="PTHR11846">
    <property type="entry name" value="ADENYLOSUCCINATE SYNTHETASE"/>
    <property type="match status" value="1"/>
</dbReference>
<dbReference type="PANTHER" id="PTHR11846:SF0">
    <property type="entry name" value="ADENYLOSUCCINATE SYNTHETASE"/>
    <property type="match status" value="1"/>
</dbReference>
<dbReference type="Pfam" id="PF00709">
    <property type="entry name" value="Adenylsucc_synt"/>
    <property type="match status" value="1"/>
</dbReference>
<dbReference type="SMART" id="SM00788">
    <property type="entry name" value="Adenylsucc_synt"/>
    <property type="match status" value="1"/>
</dbReference>
<dbReference type="SUPFAM" id="SSF52540">
    <property type="entry name" value="P-loop containing nucleoside triphosphate hydrolases"/>
    <property type="match status" value="1"/>
</dbReference>
<dbReference type="PROSITE" id="PS01266">
    <property type="entry name" value="ADENYLOSUCCIN_SYN_1"/>
    <property type="match status" value="1"/>
</dbReference>
<dbReference type="PROSITE" id="PS00513">
    <property type="entry name" value="ADENYLOSUCCIN_SYN_2"/>
    <property type="match status" value="1"/>
</dbReference>
<name>PURA_STRP1</name>
<feature type="chain" id="PRO_0000095241" description="Adenylosuccinate synthetase">
    <location>
        <begin position="1"/>
        <end position="430"/>
    </location>
</feature>
<feature type="active site" description="Proton acceptor" evidence="1">
    <location>
        <position position="13"/>
    </location>
</feature>
<feature type="active site" description="Proton donor" evidence="1">
    <location>
        <position position="41"/>
    </location>
</feature>
<feature type="binding site" evidence="1">
    <location>
        <begin position="12"/>
        <end position="18"/>
    </location>
    <ligand>
        <name>GTP</name>
        <dbReference type="ChEBI" id="CHEBI:37565"/>
    </ligand>
</feature>
<feature type="binding site" description="in other chain" evidence="1">
    <location>
        <begin position="13"/>
        <end position="16"/>
    </location>
    <ligand>
        <name>IMP</name>
        <dbReference type="ChEBI" id="CHEBI:58053"/>
        <note>ligand shared between dimeric partners</note>
    </ligand>
</feature>
<feature type="binding site" evidence="1">
    <location>
        <position position="13"/>
    </location>
    <ligand>
        <name>Mg(2+)</name>
        <dbReference type="ChEBI" id="CHEBI:18420"/>
    </ligand>
</feature>
<feature type="binding site" description="in other chain" evidence="1">
    <location>
        <begin position="38"/>
        <end position="41"/>
    </location>
    <ligand>
        <name>IMP</name>
        <dbReference type="ChEBI" id="CHEBI:58053"/>
        <note>ligand shared between dimeric partners</note>
    </ligand>
</feature>
<feature type="binding site" evidence="1">
    <location>
        <begin position="40"/>
        <end position="42"/>
    </location>
    <ligand>
        <name>GTP</name>
        <dbReference type="ChEBI" id="CHEBI:37565"/>
    </ligand>
</feature>
<feature type="binding site" evidence="1">
    <location>
        <position position="40"/>
    </location>
    <ligand>
        <name>Mg(2+)</name>
        <dbReference type="ChEBI" id="CHEBI:18420"/>
    </ligand>
</feature>
<feature type="binding site" description="in other chain" evidence="1">
    <location>
        <position position="128"/>
    </location>
    <ligand>
        <name>IMP</name>
        <dbReference type="ChEBI" id="CHEBI:58053"/>
        <note>ligand shared between dimeric partners</note>
    </ligand>
</feature>
<feature type="binding site" evidence="1">
    <location>
        <position position="142"/>
    </location>
    <ligand>
        <name>IMP</name>
        <dbReference type="ChEBI" id="CHEBI:58053"/>
        <note>ligand shared between dimeric partners</note>
    </ligand>
</feature>
<feature type="binding site" description="in other chain" evidence="1">
    <location>
        <position position="223"/>
    </location>
    <ligand>
        <name>IMP</name>
        <dbReference type="ChEBI" id="CHEBI:58053"/>
        <note>ligand shared between dimeric partners</note>
    </ligand>
</feature>
<feature type="binding site" description="in other chain" evidence="1">
    <location>
        <position position="238"/>
    </location>
    <ligand>
        <name>IMP</name>
        <dbReference type="ChEBI" id="CHEBI:58053"/>
        <note>ligand shared between dimeric partners</note>
    </ligand>
</feature>
<feature type="binding site" evidence="1">
    <location>
        <begin position="298"/>
        <end position="304"/>
    </location>
    <ligand>
        <name>substrate</name>
    </ligand>
</feature>
<feature type="binding site" description="in other chain" evidence="1">
    <location>
        <position position="302"/>
    </location>
    <ligand>
        <name>IMP</name>
        <dbReference type="ChEBI" id="CHEBI:58053"/>
        <note>ligand shared between dimeric partners</note>
    </ligand>
</feature>
<feature type="binding site" evidence="1">
    <location>
        <position position="304"/>
    </location>
    <ligand>
        <name>GTP</name>
        <dbReference type="ChEBI" id="CHEBI:37565"/>
    </ligand>
</feature>
<feature type="binding site" evidence="1">
    <location>
        <begin position="330"/>
        <end position="332"/>
    </location>
    <ligand>
        <name>GTP</name>
        <dbReference type="ChEBI" id="CHEBI:37565"/>
    </ligand>
</feature>
<feature type="binding site" evidence="1">
    <location>
        <begin position="412"/>
        <end position="414"/>
    </location>
    <ligand>
        <name>GTP</name>
        <dbReference type="ChEBI" id="CHEBI:37565"/>
    </ligand>
</feature>
<feature type="sequence conflict" description="In Ref. 2; AAZ50755." evidence="2" ref="2">
    <original>D</original>
    <variation>G</variation>
    <location>
        <position position="181"/>
    </location>
</feature>
<feature type="sequence conflict" description="In Ref. 2; AAZ50755." evidence="2" ref="2">
    <original>N</original>
    <variation>S</variation>
    <location>
        <position position="256"/>
    </location>
</feature>
<feature type="sequence conflict" description="In Ref. 2; AAZ50755." evidence="2" ref="2">
    <original>N</original>
    <variation>S</variation>
    <location>
        <position position="359"/>
    </location>
</feature>
<sequence>MTSVVVVGTQWGDEGKGKITDFLSADAEVIARYQGGDNAGHTIVIDGKKFKLHLIPSGIFFPQKISVIGNGVVVNPKSLVKELAYLHDEGVTTDNLRISDRAHVILPYHIQLDQLQEDAKGDNKIGTTIKGIGPAYMDKAARVGIRIADLLDKDIFAERLRINLAEKNRLFEKMYDSTPLDFDAIFEEYYAYGQEIKQYVTDTSVILNDALDAGKRVLFEGAQGVMLDIDQGTYPFVTSSNPVAGGVTIGSGVGPNKINKVVGVCKAYTSRVGDGPFPTELFDEVGERIREVGHEYGTTTGRPRRVGWFDSVVMRHSRRVSGITNLSLNSIDVLSGLDTVKICVAYDLDGKRIDYYPANLEQLKRCKPIYEELPGWQEDITGVRSLDELPENARNYVRRVGELVGVRISTFSVGPGREQTNILESVWASI</sequence>
<protein>
    <recommendedName>
        <fullName evidence="1">Adenylosuccinate synthetase</fullName>
        <shortName evidence="1">AMPSase</shortName>
        <shortName evidence="1">AdSS</shortName>
        <ecNumber evidence="1">6.3.4.4</ecNumber>
    </recommendedName>
    <alternativeName>
        <fullName evidence="1">IMP--aspartate ligase</fullName>
    </alternativeName>
</protein>
<keyword id="KW-0963">Cytoplasm</keyword>
<keyword id="KW-0342">GTP-binding</keyword>
<keyword id="KW-0436">Ligase</keyword>
<keyword id="KW-0460">Magnesium</keyword>
<keyword id="KW-0479">Metal-binding</keyword>
<keyword id="KW-0547">Nucleotide-binding</keyword>
<keyword id="KW-0658">Purine biosynthesis</keyword>
<keyword id="KW-1185">Reference proteome</keyword>
<reference key="1">
    <citation type="journal article" date="2001" name="Proc. Natl. Acad. Sci. U.S.A.">
        <title>Complete genome sequence of an M1 strain of Streptococcus pyogenes.</title>
        <authorList>
            <person name="Ferretti J.J."/>
            <person name="McShan W.M."/>
            <person name="Ajdic D.J."/>
            <person name="Savic D.J."/>
            <person name="Savic G."/>
            <person name="Lyon K."/>
            <person name="Primeaux C."/>
            <person name="Sezate S."/>
            <person name="Suvorov A.N."/>
            <person name="Kenton S."/>
            <person name="Lai H.S."/>
            <person name="Lin S.P."/>
            <person name="Qian Y."/>
            <person name="Jia H.G."/>
            <person name="Najar F.Z."/>
            <person name="Ren Q."/>
            <person name="Zhu H."/>
            <person name="Song L."/>
            <person name="White J."/>
            <person name="Yuan X."/>
            <person name="Clifton S.W."/>
            <person name="Roe B.A."/>
            <person name="McLaughlin R.E."/>
        </authorList>
    </citation>
    <scope>NUCLEOTIDE SEQUENCE [LARGE SCALE GENOMIC DNA]</scope>
    <source>
        <strain>ATCC 700294 / SF370 / Serotype M1</strain>
    </source>
</reference>
<reference key="2">
    <citation type="journal article" date="2005" name="J. Infect. Dis.">
        <title>Evolutionary origin and emergence of a highly successful clone of serotype M1 group A Streptococcus involved multiple horizontal gene transfer events.</title>
        <authorList>
            <person name="Sumby P."/>
            <person name="Porcella S.F."/>
            <person name="Madrigal A.G."/>
            <person name="Barbian K.D."/>
            <person name="Virtaneva K."/>
            <person name="Ricklefs S.M."/>
            <person name="Sturdevant D.E."/>
            <person name="Graham M.R."/>
            <person name="Vuopio-Varkila J."/>
            <person name="Hoe N.P."/>
            <person name="Musser J.M."/>
        </authorList>
    </citation>
    <scope>NUCLEOTIDE SEQUENCE [LARGE SCALE GENOMIC DNA]</scope>
    <source>
        <strain>ATCC BAA-947 / MGAS5005 / Serotype M1</strain>
    </source>
</reference>
<evidence type="ECO:0000255" key="1">
    <source>
        <dbReference type="HAMAP-Rule" id="MF_00011"/>
    </source>
</evidence>
<evidence type="ECO:0000305" key="2"/>
<comment type="function">
    <text evidence="1">Plays an important role in the de novo pathway of purine nucleotide biosynthesis. Catalyzes the first committed step in the biosynthesis of AMP from IMP.</text>
</comment>
<comment type="catalytic activity">
    <reaction evidence="1">
        <text>IMP + L-aspartate + GTP = N(6)-(1,2-dicarboxyethyl)-AMP + GDP + phosphate + 2 H(+)</text>
        <dbReference type="Rhea" id="RHEA:15753"/>
        <dbReference type="ChEBI" id="CHEBI:15378"/>
        <dbReference type="ChEBI" id="CHEBI:29991"/>
        <dbReference type="ChEBI" id="CHEBI:37565"/>
        <dbReference type="ChEBI" id="CHEBI:43474"/>
        <dbReference type="ChEBI" id="CHEBI:57567"/>
        <dbReference type="ChEBI" id="CHEBI:58053"/>
        <dbReference type="ChEBI" id="CHEBI:58189"/>
        <dbReference type="EC" id="6.3.4.4"/>
    </reaction>
</comment>
<comment type="cofactor">
    <cofactor evidence="1">
        <name>Mg(2+)</name>
        <dbReference type="ChEBI" id="CHEBI:18420"/>
    </cofactor>
    <text evidence="1">Binds 1 Mg(2+) ion per subunit.</text>
</comment>
<comment type="pathway">
    <text evidence="1">Purine metabolism; AMP biosynthesis via de novo pathway; AMP from IMP: step 1/2.</text>
</comment>
<comment type="subunit">
    <text evidence="1">Homodimer.</text>
</comment>
<comment type="subcellular location">
    <subcellularLocation>
        <location evidence="1">Cytoplasm</location>
    </subcellularLocation>
</comment>
<comment type="similarity">
    <text evidence="1">Belongs to the adenylosuccinate synthetase family.</text>
</comment>
<organism>
    <name type="scientific">Streptococcus pyogenes serotype M1</name>
    <dbReference type="NCBI Taxonomy" id="301447"/>
    <lineage>
        <taxon>Bacteria</taxon>
        <taxon>Bacillati</taxon>
        <taxon>Bacillota</taxon>
        <taxon>Bacilli</taxon>
        <taxon>Lactobacillales</taxon>
        <taxon>Streptococcaceae</taxon>
        <taxon>Streptococcus</taxon>
    </lineage>
</organism>